<name>PGH2_CAVPO</name>
<accession>P70682</accession>
<keyword id="KW-0223">Dioxygenase</keyword>
<keyword id="KW-1015">Disulfide bond</keyword>
<keyword id="KW-0256">Endoplasmic reticulum</keyword>
<keyword id="KW-0275">Fatty acid biosynthesis</keyword>
<keyword id="KW-0276">Fatty acid metabolism</keyword>
<keyword id="KW-0325">Glycoprotein</keyword>
<keyword id="KW-0349">Heme</keyword>
<keyword id="KW-0408">Iron</keyword>
<keyword id="KW-0444">Lipid biosynthesis</keyword>
<keyword id="KW-0443">Lipid metabolism</keyword>
<keyword id="KW-0472">Membrane</keyword>
<keyword id="KW-0479">Metal-binding</keyword>
<keyword id="KW-0492">Microsome</keyword>
<keyword id="KW-0539">Nucleus</keyword>
<keyword id="KW-0560">Oxidoreductase</keyword>
<keyword id="KW-0575">Peroxidase</keyword>
<keyword id="KW-0643">Prostaglandin biosynthesis</keyword>
<keyword id="KW-0644">Prostaglandin metabolism</keyword>
<keyword id="KW-1185">Reference proteome</keyword>
<keyword id="KW-0702">S-nitrosylation</keyword>
<keyword id="KW-0732">Signal</keyword>
<dbReference type="EC" id="1.14.99.1"/>
<dbReference type="EMBL" id="Y07896">
    <property type="protein sequence ID" value="CAA69204.1"/>
    <property type="molecule type" value="mRNA"/>
</dbReference>
<dbReference type="RefSeq" id="NP_001166478.1">
    <property type="nucleotide sequence ID" value="NM_001173007.1"/>
</dbReference>
<dbReference type="SMR" id="P70682"/>
<dbReference type="FunCoup" id="P70682">
    <property type="interactions" value="578"/>
</dbReference>
<dbReference type="STRING" id="10141.ENSCPOP00000001794"/>
<dbReference type="BindingDB" id="P70682"/>
<dbReference type="ChEMBL" id="CHEMBL4523261"/>
<dbReference type="PeroxiBase" id="4137">
    <property type="entry name" value="CpoPGHS02"/>
</dbReference>
<dbReference type="GlyCosmos" id="P70682">
    <property type="glycosylation" value="4 sites, No reported glycans"/>
</dbReference>
<dbReference type="GeneID" id="100135607"/>
<dbReference type="KEGG" id="cpoc:100135607"/>
<dbReference type="CTD" id="5743"/>
<dbReference type="eggNOG" id="KOG2408">
    <property type="taxonomic scope" value="Eukaryota"/>
</dbReference>
<dbReference type="InParanoid" id="P70682"/>
<dbReference type="OrthoDB" id="823504at2759"/>
<dbReference type="UniPathway" id="UPA00662"/>
<dbReference type="Proteomes" id="UP000005447">
    <property type="component" value="Unassembled WGS sequence"/>
</dbReference>
<dbReference type="GO" id="GO:0005737">
    <property type="term" value="C:cytoplasm"/>
    <property type="evidence" value="ECO:0000250"/>
    <property type="project" value="UniProtKB"/>
</dbReference>
<dbReference type="GO" id="GO:0005789">
    <property type="term" value="C:endoplasmic reticulum membrane"/>
    <property type="evidence" value="ECO:0007669"/>
    <property type="project" value="UniProtKB-SubCell"/>
</dbReference>
<dbReference type="GO" id="GO:0043005">
    <property type="term" value="C:neuron projection"/>
    <property type="evidence" value="ECO:0007669"/>
    <property type="project" value="TreeGrafter"/>
</dbReference>
<dbReference type="GO" id="GO:0005637">
    <property type="term" value="C:nuclear inner membrane"/>
    <property type="evidence" value="ECO:0000250"/>
    <property type="project" value="UniProtKB"/>
</dbReference>
<dbReference type="GO" id="GO:0005640">
    <property type="term" value="C:nuclear outer membrane"/>
    <property type="evidence" value="ECO:0000250"/>
    <property type="project" value="UniProtKB"/>
</dbReference>
<dbReference type="GO" id="GO:0020037">
    <property type="term" value="F:heme binding"/>
    <property type="evidence" value="ECO:0000250"/>
    <property type="project" value="UniProtKB"/>
</dbReference>
<dbReference type="GO" id="GO:0046872">
    <property type="term" value="F:metal ion binding"/>
    <property type="evidence" value="ECO:0007669"/>
    <property type="project" value="UniProtKB-KW"/>
</dbReference>
<dbReference type="GO" id="GO:0016702">
    <property type="term" value="F:oxidoreductase activity, acting on single donors with incorporation of molecular oxygen, incorporation of two atoms of oxygen"/>
    <property type="evidence" value="ECO:0007669"/>
    <property type="project" value="TreeGrafter"/>
</dbReference>
<dbReference type="GO" id="GO:0004601">
    <property type="term" value="F:peroxidase activity"/>
    <property type="evidence" value="ECO:0007669"/>
    <property type="project" value="UniProtKB-KW"/>
</dbReference>
<dbReference type="GO" id="GO:0004666">
    <property type="term" value="F:prostaglandin-endoperoxide synthase activity"/>
    <property type="evidence" value="ECO:0000250"/>
    <property type="project" value="UniProtKB"/>
</dbReference>
<dbReference type="GO" id="GO:0019371">
    <property type="term" value="P:cyclooxygenase pathway"/>
    <property type="evidence" value="ECO:0000250"/>
    <property type="project" value="UniProtKB"/>
</dbReference>
<dbReference type="GO" id="GO:0001516">
    <property type="term" value="P:prostaglandin biosynthetic process"/>
    <property type="evidence" value="ECO:0000250"/>
    <property type="project" value="UniProtKB"/>
</dbReference>
<dbReference type="GO" id="GO:0008217">
    <property type="term" value="P:regulation of blood pressure"/>
    <property type="evidence" value="ECO:0000250"/>
    <property type="project" value="UniProtKB"/>
</dbReference>
<dbReference type="GO" id="GO:0150077">
    <property type="term" value="P:regulation of neuroinflammatory response"/>
    <property type="evidence" value="ECO:0000250"/>
    <property type="project" value="UniProtKB"/>
</dbReference>
<dbReference type="GO" id="GO:0006979">
    <property type="term" value="P:response to oxidative stress"/>
    <property type="evidence" value="ECO:0007669"/>
    <property type="project" value="InterPro"/>
</dbReference>
<dbReference type="CDD" id="cd00054">
    <property type="entry name" value="EGF_CA"/>
    <property type="match status" value="1"/>
</dbReference>
<dbReference type="CDD" id="cd09816">
    <property type="entry name" value="prostaglandin_endoperoxide_synthase"/>
    <property type="match status" value="1"/>
</dbReference>
<dbReference type="FunFam" id="1.10.640.10:FF:000002">
    <property type="entry name" value="Prostaglandin G/H synthase 2"/>
    <property type="match status" value="1"/>
</dbReference>
<dbReference type="FunFam" id="2.10.25.10:FF:000235">
    <property type="entry name" value="Prostaglandin G/H synthase 2"/>
    <property type="match status" value="1"/>
</dbReference>
<dbReference type="Gene3D" id="1.10.640.10">
    <property type="entry name" value="Haem peroxidase domain superfamily, animal type"/>
    <property type="match status" value="1"/>
</dbReference>
<dbReference type="Gene3D" id="2.10.25.10">
    <property type="entry name" value="Laminin"/>
    <property type="match status" value="1"/>
</dbReference>
<dbReference type="InterPro" id="IPR000742">
    <property type="entry name" value="EGF-like_dom"/>
</dbReference>
<dbReference type="InterPro" id="IPR019791">
    <property type="entry name" value="Haem_peroxidase_animal"/>
</dbReference>
<dbReference type="InterPro" id="IPR010255">
    <property type="entry name" value="Haem_peroxidase_sf"/>
</dbReference>
<dbReference type="InterPro" id="IPR037120">
    <property type="entry name" value="Haem_peroxidase_sf_animal"/>
</dbReference>
<dbReference type="InterPro" id="IPR050783">
    <property type="entry name" value="Oxylipin_biosynth_metab"/>
</dbReference>
<dbReference type="PANTHER" id="PTHR11903">
    <property type="entry name" value="PROSTAGLANDIN G/H SYNTHASE"/>
    <property type="match status" value="1"/>
</dbReference>
<dbReference type="PANTHER" id="PTHR11903:SF8">
    <property type="entry name" value="PROSTAGLANDIN G_H SYNTHASE 2"/>
    <property type="match status" value="1"/>
</dbReference>
<dbReference type="Pfam" id="PF03098">
    <property type="entry name" value="An_peroxidase"/>
    <property type="match status" value="2"/>
</dbReference>
<dbReference type="Pfam" id="PF00008">
    <property type="entry name" value="EGF"/>
    <property type="match status" value="1"/>
</dbReference>
<dbReference type="PRINTS" id="PR00457">
    <property type="entry name" value="ANPEROXIDASE"/>
</dbReference>
<dbReference type="SUPFAM" id="SSF57196">
    <property type="entry name" value="EGF/Laminin"/>
    <property type="match status" value="1"/>
</dbReference>
<dbReference type="SUPFAM" id="SSF48113">
    <property type="entry name" value="Heme-dependent peroxidases"/>
    <property type="match status" value="1"/>
</dbReference>
<dbReference type="PROSITE" id="PS50026">
    <property type="entry name" value="EGF_3"/>
    <property type="match status" value="1"/>
</dbReference>
<dbReference type="PROSITE" id="PS50292">
    <property type="entry name" value="PEROXIDASE_3"/>
    <property type="match status" value="1"/>
</dbReference>
<reference key="1">
    <citation type="journal article" date="1997" name="Endocrinology">
        <title>Cloning of guinea pig cyclooxygenase-2 and 15-hydroxyprostaglandin dehydrogenase complementary deoxyribonucleic acids: steroid-modulated gene expression correlates to prostaglandin F2 alpha secretion in cultured endometrial cells.</title>
        <authorList>
            <person name="Bracken K.E."/>
            <person name="Elger W."/>
            <person name="Jantke I."/>
            <person name="Nanninga A."/>
            <person name="Gellersen B."/>
        </authorList>
    </citation>
    <scope>NUCLEOTIDE SEQUENCE [MRNA]</scope>
    <source>
        <strain>Hartley</strain>
        <tissue>Uterus</tissue>
    </source>
</reference>
<organism>
    <name type="scientific">Cavia porcellus</name>
    <name type="common">Guinea pig</name>
    <dbReference type="NCBI Taxonomy" id="10141"/>
    <lineage>
        <taxon>Eukaryota</taxon>
        <taxon>Metazoa</taxon>
        <taxon>Chordata</taxon>
        <taxon>Craniata</taxon>
        <taxon>Vertebrata</taxon>
        <taxon>Euteleostomi</taxon>
        <taxon>Mammalia</taxon>
        <taxon>Eutheria</taxon>
        <taxon>Euarchontoglires</taxon>
        <taxon>Glires</taxon>
        <taxon>Rodentia</taxon>
        <taxon>Hystricomorpha</taxon>
        <taxon>Caviidae</taxon>
        <taxon>Cavia</taxon>
    </lineage>
</organism>
<evidence type="ECO:0000250" key="1"/>
<evidence type="ECO:0000250" key="2">
    <source>
        <dbReference type="UniProtKB" id="P35354"/>
    </source>
</evidence>
<evidence type="ECO:0000250" key="3">
    <source>
        <dbReference type="UniProtKB" id="P79208"/>
    </source>
</evidence>
<evidence type="ECO:0000250" key="4">
    <source>
        <dbReference type="UniProtKB" id="Q05769"/>
    </source>
</evidence>
<evidence type="ECO:0000255" key="5"/>
<evidence type="ECO:0000255" key="6">
    <source>
        <dbReference type="PROSITE-ProRule" id="PRU00076"/>
    </source>
</evidence>
<evidence type="ECO:0000255" key="7">
    <source>
        <dbReference type="PROSITE-ProRule" id="PRU00298"/>
    </source>
</evidence>
<evidence type="ECO:0000305" key="8"/>
<feature type="signal peptide" evidence="1">
    <location>
        <begin position="1"/>
        <end position="17"/>
    </location>
</feature>
<feature type="chain" id="PRO_0000023873" description="Prostaglandin G/H synthase 2">
    <location>
        <begin position="18"/>
        <end position="604"/>
    </location>
</feature>
<feature type="domain" description="EGF-like" evidence="6">
    <location>
        <begin position="18"/>
        <end position="55"/>
    </location>
</feature>
<feature type="active site" description="Proton acceptor" evidence="7">
    <location>
        <position position="193"/>
    </location>
</feature>
<feature type="active site" description="For cyclooxygenase activity" evidence="4">
    <location>
        <position position="371"/>
    </location>
</feature>
<feature type="binding site" evidence="4">
    <location>
        <position position="106"/>
    </location>
    <ligand>
        <name>substrate</name>
    </ligand>
</feature>
<feature type="binding site" evidence="4">
    <location>
        <position position="341"/>
    </location>
    <ligand>
        <name>substrate</name>
    </ligand>
</feature>
<feature type="binding site" description="axial binding residue" evidence="7">
    <location>
        <position position="374"/>
    </location>
    <ligand>
        <name>heme b</name>
        <dbReference type="ChEBI" id="CHEBI:60344"/>
    </ligand>
    <ligandPart>
        <name>Fe</name>
        <dbReference type="ChEBI" id="CHEBI:18248"/>
    </ligandPart>
</feature>
<feature type="site" description="Aspirin-acetylated serine" evidence="2">
    <location>
        <position position="516"/>
    </location>
</feature>
<feature type="modified residue" description="S-nitrosocysteine" evidence="2">
    <location>
        <position position="526"/>
    </location>
</feature>
<feature type="glycosylation site" description="N-linked (GlcNAc...) asparagine" evidence="5">
    <location>
        <position position="53"/>
    </location>
</feature>
<feature type="glycosylation site" description="N-linked (GlcNAc...) asparagine" evidence="5">
    <location>
        <position position="130"/>
    </location>
</feature>
<feature type="glycosylation site" description="N-linked (GlcNAc...) asparagine" evidence="5">
    <location>
        <position position="396"/>
    </location>
</feature>
<feature type="glycosylation site" description="N-linked (GlcNAc...) asparagine" evidence="5">
    <location>
        <position position="580"/>
    </location>
</feature>
<feature type="disulfide bond" evidence="4">
    <location>
        <begin position="21"/>
        <end position="32"/>
    </location>
</feature>
<feature type="disulfide bond" evidence="4">
    <location>
        <begin position="22"/>
        <end position="145"/>
    </location>
</feature>
<feature type="disulfide bond" evidence="4">
    <location>
        <begin position="26"/>
        <end position="42"/>
    </location>
</feature>
<feature type="disulfide bond" evidence="4">
    <location>
        <begin position="44"/>
        <end position="54"/>
    </location>
</feature>
<feature type="disulfide bond" evidence="4">
    <location>
        <begin position="555"/>
        <end position="561"/>
    </location>
</feature>
<protein>
    <recommendedName>
        <fullName>Prostaglandin G/H synthase 2</fullName>
        <ecNumber>1.14.99.1</ecNumber>
    </recommendedName>
    <alternativeName>
        <fullName>Cyclooxygenase-2</fullName>
        <shortName>COX-2</shortName>
    </alternativeName>
    <alternativeName>
        <fullName>PHS II</fullName>
    </alternativeName>
    <alternativeName>
        <fullName>Prostaglandin H2 synthase 2</fullName>
        <shortName>PGH synthase 2</shortName>
        <shortName>PGHS-2</shortName>
    </alternativeName>
    <alternativeName>
        <fullName>Prostaglandin-endoperoxide synthase 2</fullName>
    </alternativeName>
</protein>
<gene>
    <name type="primary">PTGS2</name>
    <name type="synonym">COX2</name>
</gene>
<comment type="function">
    <text evidence="2 3 4">Dual cyclooxygenase and peroxidase in the biosynthesis pathway of prostanoids, a class of C20 oxylipins mainly derived from arachidonate ((5Z,8Z,11Z,14Z)-eicosatetraenoate, AA, C20:4(n-6)), with a particular role in the inflammatory response. The cyclooxygenase activity oxygenates AA to the hydroperoxy endoperoxide prostaglandin G2 (PGG2), and the peroxidase activity reduces PGG2 to the hydroxy endoperoxide prostaglandin H2 (PGH2), the precursor of all 2-series prostaglandins and thromboxanes. This complex transformation is initiated by abstraction of hydrogen at carbon 13 (with S-stereochemistry), followed by insertion of molecular O2 to form the endoperoxide bridge between carbon 9 and 11 that defines prostaglandins. The insertion of a second molecule of O2 (bis-oxygenase activity) yields a hydroperoxy group in PGG2 that is then reduced to PGH2 by two electrons. Similarly catalyzes successive cyclooxygenation and peroxidation of dihomo-gamma-linoleate (DGLA, C20:3(n-6)) and eicosapentaenoate (EPA, C20:5(n-3)) to corresponding PGH1 and PGH3, the precursors of 1- and 3-series prostaglandins. In an alternative pathway of prostanoid biosynthesis, converts 2-arachidonoyl lysophopholipids to prostanoid lysophopholipids, which are then hydrolyzed by intracellular phospholipases to release free prostanoids. Metabolizes 2-arachidonoyl glycerol yielding the glyceryl ester of PGH2, a process that can contribute to pain response. Generates lipid mediators from n-3 and n-6 polyunsaturated fatty acids (PUFAs) via a lipoxygenase-type mechanism. Oxygenates PUFAs to hydroperoxy compounds and then reduces them to corresponding alcohols. Plays a role in the generation of resolution phase interaction products (resolvins) during both sterile and infectious inflammation. Metabolizes docosahexaenoate (DHA, C22:6(n-3)) to 17R-HDHA, a precursor of the D-series resolvins (RvDs). As a component of the biosynthetic pathway of E-series resolvins (RvEs), converts eicosapentaenoate (EPA, C20:5(n-3)) primarily to 18S-HEPE that is further metabolized by ALOX5 and LTA4H to generate 18S-RvE1 and 18S-RvE2. In vascular endothelial cells, converts docosapentaenoate (DPA, C22:5(n-3)) to 13R-HDPA, a precursor for 13-series resolvins (RvTs) shown to activate macrophage phagocytosis during bacterial infection. In activated leukocytes, contributes to oxygenation of hydroxyeicosatetraenoates (HETE) to diHETES (5,15-diHETE and 5,11-diHETE). Can also use linoleate (LA, (9Z,12Z)-octadecadienoate, C18:2(n-6)) as substrate and produce hydroxyoctadecadienoates (HODEs) in a regio- and stereospecific manner, being (9R)-HODE ((9R)-hydroxy-(10E,12Z)-octadecadienoate) and (13S)-HODE ((13S)-hydroxy-(9Z,11E)-octadecadienoate) its major products (By similarity). During neuroinflammation, plays a role in neuronal secretion of specialized preresolving mediators (SPMs) 15R-lipoxin A4 that regulates phagocytic microglia (By similarity).</text>
</comment>
<comment type="catalytic activity">
    <reaction evidence="2">
        <text>(5Z,8Z,11Z,14Z)-eicosatetraenoate + AH2 + 2 O2 = prostaglandin H2 + A + H2O</text>
        <dbReference type="Rhea" id="RHEA:23728"/>
        <dbReference type="ChEBI" id="CHEBI:13193"/>
        <dbReference type="ChEBI" id="CHEBI:15377"/>
        <dbReference type="ChEBI" id="CHEBI:15379"/>
        <dbReference type="ChEBI" id="CHEBI:17499"/>
        <dbReference type="ChEBI" id="CHEBI:32395"/>
        <dbReference type="ChEBI" id="CHEBI:57405"/>
        <dbReference type="EC" id="1.14.99.1"/>
    </reaction>
    <physiologicalReaction direction="left-to-right" evidence="2">
        <dbReference type="Rhea" id="RHEA:23729"/>
    </physiologicalReaction>
</comment>
<comment type="catalytic activity">
    <reaction evidence="2">
        <text>(5Z,8Z,11Z,14Z)-eicosatetraenoate + 2 O2 = prostaglandin G2</text>
        <dbReference type="Rhea" id="RHEA:42596"/>
        <dbReference type="ChEBI" id="CHEBI:15379"/>
        <dbReference type="ChEBI" id="CHEBI:32395"/>
        <dbReference type="ChEBI" id="CHEBI:82629"/>
    </reaction>
    <physiologicalReaction direction="left-to-right" evidence="2">
        <dbReference type="Rhea" id="RHEA:42597"/>
    </physiologicalReaction>
</comment>
<comment type="catalytic activity">
    <reaction evidence="2">
        <text>prostaglandin G2 + AH2 = prostaglandin H2 + A + H2O</text>
        <dbReference type="Rhea" id="RHEA:42600"/>
        <dbReference type="ChEBI" id="CHEBI:13193"/>
        <dbReference type="ChEBI" id="CHEBI:15377"/>
        <dbReference type="ChEBI" id="CHEBI:17499"/>
        <dbReference type="ChEBI" id="CHEBI:57405"/>
        <dbReference type="ChEBI" id="CHEBI:82629"/>
    </reaction>
    <physiologicalReaction direction="left-to-right" evidence="2">
        <dbReference type="Rhea" id="RHEA:42601"/>
    </physiologicalReaction>
</comment>
<comment type="catalytic activity">
    <reaction evidence="2">
        <text>(5Z,8Z,11Z,14Z,17Z)-eicosapentaenoate + 2 O2 = prostaglandin G3</text>
        <dbReference type="Rhea" id="RHEA:50444"/>
        <dbReference type="ChEBI" id="CHEBI:15379"/>
        <dbReference type="ChEBI" id="CHEBI:58562"/>
        <dbReference type="ChEBI" id="CHEBI:133133"/>
    </reaction>
    <physiologicalReaction direction="left-to-right" evidence="2">
        <dbReference type="Rhea" id="RHEA:50445"/>
    </physiologicalReaction>
</comment>
<comment type="catalytic activity">
    <reaction evidence="2">
        <text>prostaglandin G3 + AH2 = prostaglandin H3 + A + H2O</text>
        <dbReference type="Rhea" id="RHEA:50448"/>
        <dbReference type="ChEBI" id="CHEBI:13193"/>
        <dbReference type="ChEBI" id="CHEBI:15377"/>
        <dbReference type="ChEBI" id="CHEBI:17499"/>
        <dbReference type="ChEBI" id="CHEBI:133133"/>
        <dbReference type="ChEBI" id="CHEBI:133134"/>
    </reaction>
    <physiologicalReaction direction="left-to-right" evidence="2">
        <dbReference type="Rhea" id="RHEA:50449"/>
    </physiologicalReaction>
</comment>
<comment type="catalytic activity">
    <reaction evidence="2">
        <text>(8Z,11Z,14Z)-eicosatrienoate + 2 O2 = prostaglandin G1</text>
        <dbReference type="Rhea" id="RHEA:50424"/>
        <dbReference type="ChEBI" id="CHEBI:15379"/>
        <dbReference type="ChEBI" id="CHEBI:71589"/>
        <dbReference type="ChEBI" id="CHEBI:133084"/>
    </reaction>
    <physiologicalReaction direction="left-to-right" evidence="2">
        <dbReference type="Rhea" id="RHEA:50425"/>
    </physiologicalReaction>
</comment>
<comment type="catalytic activity">
    <reaction evidence="2">
        <text>prostaglandin G1 + AH2 = prostaglandin H1 + A + H2O</text>
        <dbReference type="Rhea" id="RHEA:50432"/>
        <dbReference type="ChEBI" id="CHEBI:13193"/>
        <dbReference type="ChEBI" id="CHEBI:15377"/>
        <dbReference type="ChEBI" id="CHEBI:17499"/>
        <dbReference type="ChEBI" id="CHEBI:90793"/>
        <dbReference type="ChEBI" id="CHEBI:133084"/>
    </reaction>
    <physiologicalReaction direction="left-to-right" evidence="2">
        <dbReference type="Rhea" id="RHEA:50433"/>
    </physiologicalReaction>
</comment>
<comment type="catalytic activity">
    <reaction evidence="2">
        <text>2-(5Z,8Z,11Z,14Z)-eicosatetraenoyl-sn-glycero-3-phosphoethanolamine + 2 O2 = 2-(prostaglandin G2)-sn-glycero-3-phosphoethanolamine</text>
        <dbReference type="Rhea" id="RHEA:54204"/>
        <dbReference type="ChEBI" id="CHEBI:15379"/>
        <dbReference type="ChEBI" id="CHEBI:76091"/>
        <dbReference type="ChEBI" id="CHEBI:138098"/>
    </reaction>
    <physiologicalReaction direction="left-to-right" evidence="2">
        <dbReference type="Rhea" id="RHEA:54205"/>
    </physiologicalReaction>
</comment>
<comment type="catalytic activity">
    <reaction evidence="2">
        <text>2-(prostaglandin G2)-sn-glycero-3-phosphoethanolamine + AH2 = 2-(prostaglandin H2)-sn-glycero-3-phosphoethanolamine + A + H2O</text>
        <dbReference type="Rhea" id="RHEA:54208"/>
        <dbReference type="ChEBI" id="CHEBI:13193"/>
        <dbReference type="ChEBI" id="CHEBI:15377"/>
        <dbReference type="ChEBI" id="CHEBI:17499"/>
        <dbReference type="ChEBI" id="CHEBI:138098"/>
        <dbReference type="ChEBI" id="CHEBI:138099"/>
    </reaction>
    <physiologicalReaction direction="left-to-right" evidence="2">
        <dbReference type="Rhea" id="RHEA:54209"/>
    </physiologicalReaction>
</comment>
<comment type="catalytic activity">
    <reaction evidence="2">
        <text>2-(5Z,8Z,11Z,14Z)-eicosatetraenoyl-sn-glycero-3-phosphocholine + 2 O2 = 2-(prostaglandin G2)-sn-glycero-3-phosphocholine</text>
        <dbReference type="Rhea" id="RHEA:54212"/>
        <dbReference type="ChEBI" id="CHEBI:15379"/>
        <dbReference type="ChEBI" id="CHEBI:76079"/>
        <dbReference type="ChEBI" id="CHEBI:138100"/>
    </reaction>
    <physiologicalReaction direction="left-to-right" evidence="2">
        <dbReference type="Rhea" id="RHEA:54213"/>
    </physiologicalReaction>
</comment>
<comment type="catalytic activity">
    <reaction evidence="2">
        <text>2-(prostaglandin G2)-sn-glycero-3-phosphocholine + AH2 = 2-(prostaglandin H2)-sn-glycero-3-phosphocholine + A + H2O</text>
        <dbReference type="Rhea" id="RHEA:54216"/>
        <dbReference type="ChEBI" id="CHEBI:13193"/>
        <dbReference type="ChEBI" id="CHEBI:15377"/>
        <dbReference type="ChEBI" id="CHEBI:17499"/>
        <dbReference type="ChEBI" id="CHEBI:138100"/>
        <dbReference type="ChEBI" id="CHEBI:138101"/>
    </reaction>
    <physiologicalReaction direction="left-to-right" evidence="2">
        <dbReference type="Rhea" id="RHEA:54217"/>
    </physiologicalReaction>
</comment>
<comment type="catalytic activity">
    <reaction evidence="2">
        <text>(15S)-hydroperoxy-(5Z,8Z,11Z,13E)-eicosatetraenoate + AH2 = (15S)-hydroxy-(5Z,8Z,11Z,13E)-eicosatetraenoate + A + H2O</text>
        <dbReference type="Rhea" id="RHEA:48856"/>
        <dbReference type="ChEBI" id="CHEBI:13193"/>
        <dbReference type="ChEBI" id="CHEBI:15377"/>
        <dbReference type="ChEBI" id="CHEBI:17499"/>
        <dbReference type="ChEBI" id="CHEBI:57409"/>
        <dbReference type="ChEBI" id="CHEBI:57446"/>
    </reaction>
    <physiologicalReaction direction="left-to-right" evidence="2">
        <dbReference type="Rhea" id="RHEA:48857"/>
    </physiologicalReaction>
</comment>
<comment type="catalytic activity">
    <reaction evidence="2">
        <text>2-(5Z,8Z,11Z,14Z)-eicosatetraenoyl-sn-glycero-3-phosphocholine + AH2 + O2 = 2-[(15S)-hydroxy-(5Z,8Z,11Z,13E)-eicosatetraenoyl]-sn-glycero-3-phosphocholine + A + H2O</text>
        <dbReference type="Rhea" id="RHEA:53684"/>
        <dbReference type="ChEBI" id="CHEBI:13193"/>
        <dbReference type="ChEBI" id="CHEBI:15377"/>
        <dbReference type="ChEBI" id="CHEBI:15379"/>
        <dbReference type="ChEBI" id="CHEBI:17499"/>
        <dbReference type="ChEBI" id="CHEBI:76079"/>
        <dbReference type="ChEBI" id="CHEBI:137584"/>
    </reaction>
    <physiologicalReaction direction="left-to-right" evidence="2">
        <dbReference type="Rhea" id="RHEA:53685"/>
    </physiologicalReaction>
</comment>
<comment type="catalytic activity">
    <reaction evidence="2">
        <text>2-(5Z,8Z,11Z,14Z)-eicosatetraenoyl-sn-glycero-3-phosphocholine + AH2 + O2 = 2-[(15R)-hydroxy-(5Z,8Z,11Z,13E)-eicosatetraenoyl]-sn-glycero-3-phosphocholine + A + H2O</text>
        <dbReference type="Rhea" id="RHEA:53680"/>
        <dbReference type="ChEBI" id="CHEBI:13193"/>
        <dbReference type="ChEBI" id="CHEBI:15377"/>
        <dbReference type="ChEBI" id="CHEBI:15379"/>
        <dbReference type="ChEBI" id="CHEBI:17499"/>
        <dbReference type="ChEBI" id="CHEBI:76079"/>
        <dbReference type="ChEBI" id="CHEBI:137583"/>
    </reaction>
    <physiologicalReaction direction="left-to-right" evidence="2">
        <dbReference type="Rhea" id="RHEA:53681"/>
    </physiologicalReaction>
</comment>
<comment type="catalytic activity">
    <reaction evidence="2">
        <text>2-(5Z,8Z,11Z,14Z)-eicosatetraenoyl-sn-glycero-3-phosphocholine + AH2 + O2 = 2-[(11R)-hydroxy-(5Z,8Z,12E,14Z)-eicosatetraenoyl]-sn-glycero-3-phosphocholine + A + H2O</text>
        <dbReference type="Rhea" id="RHEA:53676"/>
        <dbReference type="ChEBI" id="CHEBI:13193"/>
        <dbReference type="ChEBI" id="CHEBI:15377"/>
        <dbReference type="ChEBI" id="CHEBI:15379"/>
        <dbReference type="ChEBI" id="CHEBI:17499"/>
        <dbReference type="ChEBI" id="CHEBI:76079"/>
        <dbReference type="ChEBI" id="CHEBI:137582"/>
    </reaction>
    <physiologicalReaction direction="left-to-right" evidence="2">
        <dbReference type="Rhea" id="RHEA:53677"/>
    </physiologicalReaction>
</comment>
<comment type="catalytic activity">
    <reaction evidence="2">
        <text>(9Z,12Z)-octadecadienoate + AH2 + O2 = 9-hydroxy-(10E,12Z)-octadecadienoate + A + H2O</text>
        <dbReference type="Rhea" id="RHEA:50864"/>
        <dbReference type="ChEBI" id="CHEBI:13193"/>
        <dbReference type="ChEBI" id="CHEBI:15377"/>
        <dbReference type="ChEBI" id="CHEBI:15379"/>
        <dbReference type="ChEBI" id="CHEBI:17499"/>
        <dbReference type="ChEBI" id="CHEBI:30245"/>
        <dbReference type="ChEBI" id="CHEBI:133820"/>
    </reaction>
    <physiologicalReaction direction="left-to-right" evidence="2">
        <dbReference type="Rhea" id="RHEA:50865"/>
    </physiologicalReaction>
</comment>
<comment type="catalytic activity">
    <reaction evidence="2">
        <text>(9Z,12Z)-octadecadienoate + AH2 + O2 = 13-hydroxy-(9Z,11E)-octadecadienoate + A + H2O</text>
        <dbReference type="Rhea" id="RHEA:50860"/>
        <dbReference type="ChEBI" id="CHEBI:13193"/>
        <dbReference type="ChEBI" id="CHEBI:15377"/>
        <dbReference type="ChEBI" id="CHEBI:15379"/>
        <dbReference type="ChEBI" id="CHEBI:17499"/>
        <dbReference type="ChEBI" id="CHEBI:30245"/>
        <dbReference type="ChEBI" id="CHEBI:133819"/>
    </reaction>
    <physiologicalReaction direction="left-to-right" evidence="2">
        <dbReference type="Rhea" id="RHEA:50861"/>
    </physiologicalReaction>
</comment>
<comment type="catalytic activity">
    <reaction evidence="2">
        <text>(5Z,8Z,11Z,14Z)-eicosatetraenoate + AH2 + O2 = (15R)-hydroxy-(5Z,8Z,11Z,13E)-eicosatetraenoate + A + H2O</text>
        <dbReference type="Rhea" id="RHEA:50856"/>
        <dbReference type="ChEBI" id="CHEBI:13193"/>
        <dbReference type="ChEBI" id="CHEBI:15377"/>
        <dbReference type="ChEBI" id="CHEBI:15379"/>
        <dbReference type="ChEBI" id="CHEBI:17499"/>
        <dbReference type="ChEBI" id="CHEBI:32395"/>
        <dbReference type="ChEBI" id="CHEBI:78837"/>
    </reaction>
    <physiologicalReaction direction="left-to-right" evidence="2">
        <dbReference type="Rhea" id="RHEA:50857"/>
    </physiologicalReaction>
</comment>
<comment type="catalytic activity">
    <reaction evidence="2">
        <text>(5Z,8Z,11Z,14Z)-eicosatetraenoate + AH2 + O2 = (11R)-hydroxy-(5Z,8Z,12E,14Z)-eicosatetraenoate + A + H2O</text>
        <dbReference type="Rhea" id="RHEA:50852"/>
        <dbReference type="ChEBI" id="CHEBI:13193"/>
        <dbReference type="ChEBI" id="CHEBI:15377"/>
        <dbReference type="ChEBI" id="CHEBI:15379"/>
        <dbReference type="ChEBI" id="CHEBI:17499"/>
        <dbReference type="ChEBI" id="CHEBI:32395"/>
        <dbReference type="ChEBI" id="CHEBI:78836"/>
    </reaction>
    <physiologicalReaction direction="left-to-right" evidence="2">
        <dbReference type="Rhea" id="RHEA:50853"/>
    </physiologicalReaction>
</comment>
<comment type="catalytic activity">
    <reaction evidence="2">
        <text>(5Z,8Z,11Z,14Z,17Z)-eicosapentaenoate + AH2 + O2 = (11R)-hydroxy-(5Z,8Z,12E,14Z,17Z)-eicosapentaenoate + A + H2O</text>
        <dbReference type="Rhea" id="RHEA:50848"/>
        <dbReference type="ChEBI" id="CHEBI:13193"/>
        <dbReference type="ChEBI" id="CHEBI:15377"/>
        <dbReference type="ChEBI" id="CHEBI:15379"/>
        <dbReference type="ChEBI" id="CHEBI:17499"/>
        <dbReference type="ChEBI" id="CHEBI:58562"/>
        <dbReference type="ChEBI" id="CHEBI:90820"/>
    </reaction>
    <physiologicalReaction direction="left-to-right" evidence="2">
        <dbReference type="Rhea" id="RHEA:50849"/>
    </physiologicalReaction>
</comment>
<comment type="catalytic activity">
    <reaction evidence="2">
        <text>(5Z,8Z,11Z,14Z,17Z)-eicosapentaenoate + AH2 + O2 = (18S)-hydroxy-(5Z,8Z,11Z,14Z,16E)-eicosapentaenoate + A + H2O</text>
        <dbReference type="Rhea" id="RHEA:50200"/>
        <dbReference type="ChEBI" id="CHEBI:13193"/>
        <dbReference type="ChEBI" id="CHEBI:15377"/>
        <dbReference type="ChEBI" id="CHEBI:15379"/>
        <dbReference type="ChEBI" id="CHEBI:17499"/>
        <dbReference type="ChEBI" id="CHEBI:58562"/>
        <dbReference type="ChEBI" id="CHEBI:132083"/>
    </reaction>
    <physiologicalReaction direction="left-to-right" evidence="2">
        <dbReference type="Rhea" id="RHEA:50201"/>
    </physiologicalReaction>
</comment>
<comment type="catalytic activity">
    <reaction evidence="2">
        <text>(5Z,8Z,11Z,14Z,17Z)-eicosapentaenoate + AH2 + O2 = (18R)-hydroxy-(5Z,8Z,11Z,14Z,16E)-eicosapentaenoate + A + H2O</text>
        <dbReference type="Rhea" id="RHEA:48836"/>
        <dbReference type="ChEBI" id="CHEBI:13193"/>
        <dbReference type="ChEBI" id="CHEBI:15377"/>
        <dbReference type="ChEBI" id="CHEBI:15379"/>
        <dbReference type="ChEBI" id="CHEBI:17499"/>
        <dbReference type="ChEBI" id="CHEBI:58562"/>
        <dbReference type="ChEBI" id="CHEBI:90818"/>
    </reaction>
    <physiologicalReaction direction="left-to-right" evidence="2">
        <dbReference type="Rhea" id="RHEA:48837"/>
    </physiologicalReaction>
</comment>
<comment type="catalytic activity">
    <reaction evidence="2">
        <text>(5Z,8Z,11Z,14Z,17Z)-eicosapentaenoate + AH2 + O2 = (15R)-hydroxy-(5Z,8Z,11Z,13E,17Z)-eicosapentaenoate + A + H2O</text>
        <dbReference type="Rhea" id="RHEA:48840"/>
        <dbReference type="ChEBI" id="CHEBI:13193"/>
        <dbReference type="ChEBI" id="CHEBI:15377"/>
        <dbReference type="ChEBI" id="CHEBI:15379"/>
        <dbReference type="ChEBI" id="CHEBI:17499"/>
        <dbReference type="ChEBI" id="CHEBI:58562"/>
        <dbReference type="ChEBI" id="CHEBI:90819"/>
    </reaction>
    <physiologicalReaction direction="left-to-right" evidence="2">
        <dbReference type="Rhea" id="RHEA:48841"/>
    </physiologicalReaction>
</comment>
<comment type="catalytic activity">
    <reaction evidence="2">
        <text>(5Z,8Z,11Z,14Z,17Z)-eicosapentaenoate + AH2 + O2 = (15S)-hydroxy-(5Z,8Z,11Z,13E,17Z)-eicosapentaenoate + A + H2O</text>
        <dbReference type="Rhea" id="RHEA:50196"/>
        <dbReference type="ChEBI" id="CHEBI:13193"/>
        <dbReference type="ChEBI" id="CHEBI:15377"/>
        <dbReference type="ChEBI" id="CHEBI:15379"/>
        <dbReference type="ChEBI" id="CHEBI:17499"/>
        <dbReference type="ChEBI" id="CHEBI:58562"/>
        <dbReference type="ChEBI" id="CHEBI:132087"/>
    </reaction>
    <physiologicalReaction direction="left-to-right" evidence="2">
        <dbReference type="Rhea" id="RHEA:50197"/>
    </physiologicalReaction>
</comment>
<comment type="catalytic activity">
    <reaction evidence="2">
        <text>(7Z,10Z,13Z,16Z,19Z)-docosapentaenoate + AH2 + O2 = 13R-hydroxy-(7Z,10Z,14E,16Z,19Z)-docosapentaenoate + A + H2O</text>
        <dbReference type="Rhea" id="RHEA:48852"/>
        <dbReference type="ChEBI" id="CHEBI:13193"/>
        <dbReference type="ChEBI" id="CHEBI:15377"/>
        <dbReference type="ChEBI" id="CHEBI:15379"/>
        <dbReference type="ChEBI" id="CHEBI:17499"/>
        <dbReference type="ChEBI" id="CHEBI:77224"/>
        <dbReference type="ChEBI" id="CHEBI:90824"/>
    </reaction>
    <physiologicalReaction direction="left-to-right" evidence="2">
        <dbReference type="Rhea" id="RHEA:48853"/>
    </physiologicalReaction>
</comment>
<comment type="catalytic activity">
    <reaction evidence="2">
        <text>(4Z,7Z,10Z,13Z,16Z,19Z)-docosahexaenoate + AH2 + O2 = 13-hydroxy-(4Z,7Z,10Z,14E,16Z,19Z)-docosahexaenoate + A + H2O</text>
        <dbReference type="Rhea" id="RHEA:48820"/>
        <dbReference type="ChEBI" id="CHEBI:13193"/>
        <dbReference type="ChEBI" id="CHEBI:15377"/>
        <dbReference type="ChEBI" id="CHEBI:15379"/>
        <dbReference type="ChEBI" id="CHEBI:17499"/>
        <dbReference type="ChEBI" id="CHEBI:77016"/>
        <dbReference type="ChEBI" id="CHEBI:90815"/>
    </reaction>
    <physiologicalReaction direction="left-to-right" evidence="2">
        <dbReference type="Rhea" id="RHEA:48821"/>
    </physiologicalReaction>
</comment>
<comment type="catalytic activity">
    <reaction evidence="2">
        <text>(5S)-hydroxy-(6E,8Z,11Z,14Z)-eicosatetraenoate + AH2 + O2 = (5S,15R)-dihydroxy-(6E,8Z,11Z,13E)-eicosatetraenoate + A + H2O</text>
        <dbReference type="Rhea" id="RHEA:48812"/>
        <dbReference type="ChEBI" id="CHEBI:13193"/>
        <dbReference type="ChEBI" id="CHEBI:15377"/>
        <dbReference type="ChEBI" id="CHEBI:15379"/>
        <dbReference type="ChEBI" id="CHEBI:17499"/>
        <dbReference type="ChEBI" id="CHEBI:90632"/>
        <dbReference type="ChEBI" id="CHEBI:90812"/>
    </reaction>
    <physiologicalReaction direction="left-to-right" evidence="2">
        <dbReference type="Rhea" id="RHEA:48813"/>
    </physiologicalReaction>
</comment>
<comment type="catalytic activity">
    <reaction evidence="2">
        <text>(4Z,7Z,10Z,13Z,16Z,19Z)-docosahexaenoate + AH2 + O2 = 17R-hydroxy-(4Z,7Z,10Z,13Z,15E,19Z)-docosahexaenoate + A + H2O</text>
        <dbReference type="Rhea" id="RHEA:48816"/>
        <dbReference type="ChEBI" id="CHEBI:13193"/>
        <dbReference type="ChEBI" id="CHEBI:15377"/>
        <dbReference type="ChEBI" id="CHEBI:15379"/>
        <dbReference type="ChEBI" id="CHEBI:17499"/>
        <dbReference type="ChEBI" id="CHEBI:77016"/>
        <dbReference type="ChEBI" id="CHEBI:90814"/>
    </reaction>
    <physiologicalReaction direction="left-to-right" evidence="2">
        <dbReference type="Rhea" id="RHEA:48817"/>
    </physiologicalReaction>
</comment>
<comment type="catalytic activity">
    <reaction evidence="2">
        <text>(5S)-hydroxy-(6E,8Z,11Z,14Z)-eicosatetraenoate + AH2 + O2 = (5S,15S)-dihydroxy-(6E,8Z,11Z,13E)-eicosatetraenoate + A + H2O</text>
        <dbReference type="Rhea" id="RHEA:48808"/>
        <dbReference type="ChEBI" id="CHEBI:13193"/>
        <dbReference type="ChEBI" id="CHEBI:15377"/>
        <dbReference type="ChEBI" id="CHEBI:15379"/>
        <dbReference type="ChEBI" id="CHEBI:17499"/>
        <dbReference type="ChEBI" id="CHEBI:90632"/>
        <dbReference type="ChEBI" id="CHEBI:90813"/>
    </reaction>
    <physiologicalReaction direction="left-to-right" evidence="2">
        <dbReference type="Rhea" id="RHEA:48809"/>
    </physiologicalReaction>
</comment>
<comment type="catalytic activity">
    <reaction evidence="2">
        <text>(5S)-hydroxy-(6E,8Z,11Z,14Z)-eicosatetraenoate + AH2 + O2 = (5S,11R)-dihydroxy-(6E,8Z,12E,14Z)-eicosatetraenoate + A + H2O</text>
        <dbReference type="Rhea" id="RHEA:48804"/>
        <dbReference type="ChEBI" id="CHEBI:13193"/>
        <dbReference type="ChEBI" id="CHEBI:15377"/>
        <dbReference type="ChEBI" id="CHEBI:15379"/>
        <dbReference type="ChEBI" id="CHEBI:17499"/>
        <dbReference type="ChEBI" id="CHEBI:90632"/>
        <dbReference type="ChEBI" id="CHEBI:90810"/>
    </reaction>
    <physiologicalReaction direction="left-to-right" evidence="2">
        <dbReference type="Rhea" id="RHEA:48805"/>
    </physiologicalReaction>
</comment>
<comment type="catalytic activity">
    <reaction evidence="2">
        <text>2-(5Z,8Z,11Z,14Z-eicosatetraenoyl)-glycerol + 2 O2 = 2-glyceryl-prostaglandin G2</text>
        <dbReference type="Rhea" id="RHEA:45288"/>
        <dbReference type="ChEBI" id="CHEBI:15379"/>
        <dbReference type="ChEBI" id="CHEBI:52392"/>
        <dbReference type="ChEBI" id="CHEBI:85165"/>
    </reaction>
    <physiologicalReaction direction="left-to-right" evidence="2">
        <dbReference type="Rhea" id="RHEA:45289"/>
    </physiologicalReaction>
</comment>
<comment type="catalytic activity">
    <reaction evidence="2">
        <text>2-glyceryl-prostaglandin G2 + AH2 = 2-glyceryl-prostaglandin H2 + A + H2O</text>
        <dbReference type="Rhea" id="RHEA:45292"/>
        <dbReference type="ChEBI" id="CHEBI:13193"/>
        <dbReference type="ChEBI" id="CHEBI:15377"/>
        <dbReference type="ChEBI" id="CHEBI:17499"/>
        <dbReference type="ChEBI" id="CHEBI:85165"/>
        <dbReference type="ChEBI" id="CHEBI:85166"/>
    </reaction>
    <physiologicalReaction direction="left-to-right" evidence="2">
        <dbReference type="Rhea" id="RHEA:45293"/>
    </physiologicalReaction>
</comment>
<comment type="catalytic activity">
    <reaction evidence="2">
        <text>(5Z,8Z,11Z,14Z)-eicosatetraenoate + O2 = (15R)-hydroperoxy-(5Z,8Z,11Z,13E)-eicosatetraenoate</text>
        <dbReference type="Rhea" id="RHEA:42284"/>
        <dbReference type="ChEBI" id="CHEBI:15379"/>
        <dbReference type="ChEBI" id="CHEBI:32395"/>
        <dbReference type="ChEBI" id="CHEBI:82626"/>
    </reaction>
    <physiologicalReaction direction="left-to-right" evidence="2">
        <dbReference type="Rhea" id="RHEA:42285"/>
    </physiologicalReaction>
</comment>
<comment type="catalytic activity">
    <reaction evidence="2">
        <text>(5Z,8Z,11Z,14Z)-eicosatetraenoate + O2 = 11R-hydroperoxy-(5Z,8Z,12E,14Z)-eicosatetraenoate</text>
        <dbReference type="Rhea" id="RHEA:42280"/>
        <dbReference type="ChEBI" id="CHEBI:15379"/>
        <dbReference type="ChEBI" id="CHEBI:32395"/>
        <dbReference type="ChEBI" id="CHEBI:82628"/>
    </reaction>
    <physiologicalReaction direction="left-to-right" evidence="2">
        <dbReference type="Rhea" id="RHEA:42281"/>
    </physiologicalReaction>
</comment>
<comment type="catalytic activity">
    <reaction evidence="3">
        <text>(9Z,12Z)-octadecadienoate + AH2 + O2 = (9R)-hydroxy-(10E,12Z)-octadecadienoate + A + H2O</text>
        <dbReference type="Rhea" id="RHEA:75447"/>
        <dbReference type="ChEBI" id="CHEBI:13193"/>
        <dbReference type="ChEBI" id="CHEBI:15377"/>
        <dbReference type="ChEBI" id="CHEBI:15379"/>
        <dbReference type="ChEBI" id="CHEBI:17499"/>
        <dbReference type="ChEBI" id="CHEBI:30245"/>
        <dbReference type="ChEBI" id="CHEBI:77895"/>
    </reaction>
    <physiologicalReaction direction="left-to-right" evidence="3">
        <dbReference type="Rhea" id="RHEA:75448"/>
    </physiologicalReaction>
</comment>
<comment type="catalytic activity">
    <reaction evidence="3">
        <text>(9Z,12Z)-octadecadienoate + AH2 + O2 = (9S)-hydroxy-(10E,12Z)-octadecadienoate + A + H2O</text>
        <dbReference type="Rhea" id="RHEA:75459"/>
        <dbReference type="ChEBI" id="CHEBI:13193"/>
        <dbReference type="ChEBI" id="CHEBI:15377"/>
        <dbReference type="ChEBI" id="CHEBI:15379"/>
        <dbReference type="ChEBI" id="CHEBI:17499"/>
        <dbReference type="ChEBI" id="CHEBI:30245"/>
        <dbReference type="ChEBI" id="CHEBI:77852"/>
    </reaction>
    <physiologicalReaction direction="left-to-right" evidence="3">
        <dbReference type="Rhea" id="RHEA:75460"/>
    </physiologicalReaction>
</comment>
<comment type="catalytic activity">
    <reaction evidence="3">
        <text>(9Z,12Z)-octadecadienoate + AH2 + O2 = (13S)-hydroxy-(9Z,11E)-octadecadienoate + A + H2O</text>
        <dbReference type="Rhea" id="RHEA:75451"/>
        <dbReference type="ChEBI" id="CHEBI:13193"/>
        <dbReference type="ChEBI" id="CHEBI:15377"/>
        <dbReference type="ChEBI" id="CHEBI:15379"/>
        <dbReference type="ChEBI" id="CHEBI:17499"/>
        <dbReference type="ChEBI" id="CHEBI:30245"/>
        <dbReference type="ChEBI" id="CHEBI:90850"/>
    </reaction>
    <physiologicalReaction direction="left-to-right" evidence="3">
        <dbReference type="Rhea" id="RHEA:75452"/>
    </physiologicalReaction>
</comment>
<comment type="catalytic activity">
    <reaction evidence="3">
        <text>(9Z,12Z)-octadecadienoate + AH2 + O2 = (13R)-hydroxy-(9Z,11E)-octadecadienoate + A + H2O</text>
        <dbReference type="Rhea" id="RHEA:75455"/>
        <dbReference type="ChEBI" id="CHEBI:13193"/>
        <dbReference type="ChEBI" id="CHEBI:15377"/>
        <dbReference type="ChEBI" id="CHEBI:15379"/>
        <dbReference type="ChEBI" id="CHEBI:17499"/>
        <dbReference type="ChEBI" id="CHEBI:30245"/>
        <dbReference type="ChEBI" id="CHEBI:136655"/>
    </reaction>
    <physiologicalReaction direction="left-to-right" evidence="3">
        <dbReference type="Rhea" id="RHEA:75456"/>
    </physiologicalReaction>
</comment>
<comment type="cofactor">
    <cofactor evidence="4">
        <name>heme b</name>
        <dbReference type="ChEBI" id="CHEBI:60344"/>
    </cofactor>
    <text evidence="4">Binds 1 heme b (iron(II)-protoporphyrin IX) group per subunit.</text>
</comment>
<comment type="pathway">
    <text evidence="2">Lipid metabolism; prostaglandin biosynthesis.</text>
</comment>
<comment type="subunit">
    <text evidence="4">Homodimer.</text>
</comment>
<comment type="subcellular location">
    <subcellularLocation>
        <location evidence="2">Microsome membrane</location>
        <topology evidence="2">Peripheral membrane protein</topology>
    </subcellularLocation>
    <subcellularLocation>
        <location evidence="2">Endoplasmic reticulum membrane</location>
        <topology evidence="2">Peripheral membrane protein</topology>
    </subcellularLocation>
    <subcellularLocation>
        <location evidence="2">Nucleus inner membrane</location>
        <topology evidence="2">Peripheral membrane protein</topology>
    </subcellularLocation>
    <subcellularLocation>
        <location evidence="2">Nucleus outer membrane</location>
        <topology evidence="2">Peripheral membrane protein</topology>
    </subcellularLocation>
    <text evidence="2">Detected on the lumenal side of the endoplasmic reticulum and nuclear envelope.</text>
</comment>
<comment type="PTM">
    <text evidence="2">S-nitrosylation by NOS2 (iNOS) activates enzyme activity. S-nitrosylation may take place on different Cys residues in addition to Cys-526.</text>
</comment>
<comment type="miscellaneous">
    <text>The conversion of arachidonate to prostaglandin H2 is a 2 step reaction: a cyclooxygenase (COX) reaction which converts arachidonate to prostaglandin G2 (PGG2) and a peroxidase reaction in which PGG2 is reduced to prostaglandin H2 (PGH2). The cyclooxygenase reaction occurs in a hydrophobic channel in the core of the enzyme. The peroxidase reaction occurs at a heme-containing active site located near the protein surface. The nonsteroidal anti-inflammatory drugs (NSAIDs) binding site corresponds to the cyclooxygenase active site.</text>
</comment>
<comment type="miscellaneous">
    <text>Conversion of arachidonate to prostaglandin H2 is mediated by 2 different isozymes: the constitutive PTGS1 and the inducible PTGS2. PTGS1 is expressed constitutively and generally produces prostanoids acutely in response to hormonal stimuli to fine-tune physiological processes requiring instantaneous, continuous regulation (e.g. hemostasis). PTGS2 is inducible and typically produces prostanoids that mediate responses to physiological stresses such as infection and inflammation.</text>
</comment>
<comment type="miscellaneous">
    <text>PTGS1 and PTGS2 are the targets of nonsteroidal anti-inflammatory drugs (NSAIDs) including aspirin and ibuprofen. Aspirin is able to produce an irreversible inactivation of the enzyme through a serine acetylation. Inhibition of the PGHSs with NSAIDs acutely reduces inflammation, pain, and fever, and long-term use of these drugs reduces fatal thrombotic events, as well as the development of colon cancer and Alzheimer's disease. PTGS2 is the principal isozyme responsible for production of inflammatory prostaglandins. New generation PTGSs inhibitors strive to be selective for PTGS2, to avoid side effects such as gastrointestinal complications and ulceration.</text>
</comment>
<comment type="similarity">
    <text evidence="8">Belongs to the prostaglandin G/H synthase family.</text>
</comment>
<proteinExistence type="evidence at transcript level"/>
<sequence>MLARALLLCAALALGQAANPCCSNPCQNRGECLSVGFDRYKCDCTRTGYYGENCTTPEFLTRIKLLLKPTPNTVHYILTHFKGVWNIVNNIPFLRNAIMIYVLTSRSHLIDSPPTYNAHYGYKSWEAFSNLSYYTRALPPVADDCPTPMGVKGKKELPDSNEVLEKVLLRRKFIPDPQGTNMMFAFFAQHFTHQFFKSDQKRGPAFTTGLAHGVDLSHIYGETLDRQHKLRLFKDGKMKYQIIDGEMYPPTVKETQVEMMYPPYIPEHARFAVGQEVFGLVPGLMMYATIWLREHNRVCDVLKQEHPEWDDERLFQTSRLILIGETIKIVIEDYVQHLSGYHFKLKFDPELLFNQQFQYQNRIASEFNTLYHWHPLLPDTFQIDDQVYNFQQFLYNNSILVEHGLTQFVESFTKQIAGRVAGGRNVPLAVQRVAKASIEHSRKMKYQSLNEYRKRFLMKPYTSFEELTGEKEMAAGLEALYGDIDAMELYPALLVEKPRPDAIFGETMVEMGAPFSLKGLMGNPICSPHYWKPSTFGGEVGFQIVNTASIQSLICNNVKGCPVTAFNLPDPQLAKTVTINASASHSRLEDLSPTVLLKGRSTEL</sequence>